<feature type="chain" id="PRO_0000158185" description="Imidazoleglycerol-phosphate dehydratase">
    <location>
        <begin position="1"/>
        <end position="178"/>
    </location>
</feature>
<evidence type="ECO:0000255" key="1">
    <source>
        <dbReference type="HAMAP-Rule" id="MF_00076"/>
    </source>
</evidence>
<comment type="catalytic activity">
    <reaction evidence="1">
        <text>D-erythro-1-(imidazol-4-yl)glycerol 3-phosphate = 3-(imidazol-4-yl)-2-oxopropyl phosphate + H2O</text>
        <dbReference type="Rhea" id="RHEA:11040"/>
        <dbReference type="ChEBI" id="CHEBI:15377"/>
        <dbReference type="ChEBI" id="CHEBI:57766"/>
        <dbReference type="ChEBI" id="CHEBI:58278"/>
        <dbReference type="EC" id="4.2.1.19"/>
    </reaction>
</comment>
<comment type="pathway">
    <text evidence="1">Amino-acid biosynthesis; L-histidine biosynthesis; L-histidine from 5-phospho-alpha-D-ribose 1-diphosphate: step 6/9.</text>
</comment>
<comment type="subcellular location">
    <subcellularLocation>
        <location evidence="1">Cytoplasm</location>
    </subcellularLocation>
</comment>
<comment type="similarity">
    <text evidence="1">Belongs to the imidazoleglycerol-phosphate dehydratase family.</text>
</comment>
<protein>
    <recommendedName>
        <fullName evidence="1">Imidazoleglycerol-phosphate dehydratase</fullName>
        <shortName evidence="1">IGPD</shortName>
        <ecNumber evidence="1">4.2.1.19</ecNumber>
    </recommendedName>
</protein>
<gene>
    <name evidence="1" type="primary">hisB</name>
    <name type="ordered locus">AF_0985</name>
</gene>
<name>HIS7_ARCFU</name>
<keyword id="KW-0028">Amino-acid biosynthesis</keyword>
<keyword id="KW-0963">Cytoplasm</keyword>
<keyword id="KW-0368">Histidine biosynthesis</keyword>
<keyword id="KW-0456">Lyase</keyword>
<keyword id="KW-1185">Reference proteome</keyword>
<proteinExistence type="inferred from homology"/>
<dbReference type="EC" id="4.2.1.19" evidence="1"/>
<dbReference type="EMBL" id="AE000782">
    <property type="protein sequence ID" value="AAB90265.1"/>
    <property type="molecule type" value="Genomic_DNA"/>
</dbReference>
<dbReference type="PIR" id="A69373">
    <property type="entry name" value="A69373"/>
</dbReference>
<dbReference type="RefSeq" id="WP_010878485.1">
    <property type="nucleotide sequence ID" value="NC_000917.1"/>
</dbReference>
<dbReference type="SMR" id="O29277"/>
<dbReference type="STRING" id="224325.AF_0985"/>
<dbReference type="PaxDb" id="224325-AF_0985"/>
<dbReference type="EnsemblBacteria" id="AAB90265">
    <property type="protein sequence ID" value="AAB90265"/>
    <property type="gene ID" value="AF_0985"/>
</dbReference>
<dbReference type="GeneID" id="1484208"/>
<dbReference type="KEGG" id="afu:AF_0985"/>
<dbReference type="eggNOG" id="arCOG04398">
    <property type="taxonomic scope" value="Archaea"/>
</dbReference>
<dbReference type="HOGENOM" id="CLU_044308_2_1_2"/>
<dbReference type="OrthoDB" id="103579at2157"/>
<dbReference type="PhylomeDB" id="O29277"/>
<dbReference type="UniPathway" id="UPA00031">
    <property type="reaction ID" value="UER00011"/>
</dbReference>
<dbReference type="Proteomes" id="UP000002199">
    <property type="component" value="Chromosome"/>
</dbReference>
<dbReference type="GO" id="GO:0005737">
    <property type="term" value="C:cytoplasm"/>
    <property type="evidence" value="ECO:0007669"/>
    <property type="project" value="UniProtKB-SubCell"/>
</dbReference>
<dbReference type="GO" id="GO:0004424">
    <property type="term" value="F:imidazoleglycerol-phosphate dehydratase activity"/>
    <property type="evidence" value="ECO:0007669"/>
    <property type="project" value="UniProtKB-UniRule"/>
</dbReference>
<dbReference type="GO" id="GO:0000105">
    <property type="term" value="P:L-histidine biosynthetic process"/>
    <property type="evidence" value="ECO:0007669"/>
    <property type="project" value="UniProtKB-UniRule"/>
</dbReference>
<dbReference type="FunFam" id="3.30.230.40:FF:000003">
    <property type="entry name" value="Imidazoleglycerol-phosphate dehydratase HisB"/>
    <property type="match status" value="1"/>
</dbReference>
<dbReference type="Gene3D" id="3.30.230.40">
    <property type="entry name" value="Imidazole glycerol phosphate dehydratase, domain 1"/>
    <property type="match status" value="2"/>
</dbReference>
<dbReference type="HAMAP" id="MF_00076">
    <property type="entry name" value="HisB"/>
    <property type="match status" value="1"/>
</dbReference>
<dbReference type="InterPro" id="IPR038494">
    <property type="entry name" value="IGPD_sf"/>
</dbReference>
<dbReference type="InterPro" id="IPR000807">
    <property type="entry name" value="ImidazoleglycerolP_deHydtase"/>
</dbReference>
<dbReference type="InterPro" id="IPR020565">
    <property type="entry name" value="ImidazoleglycerP_deHydtase_CS"/>
</dbReference>
<dbReference type="InterPro" id="IPR020568">
    <property type="entry name" value="Ribosomal_Su5_D2-typ_SF"/>
</dbReference>
<dbReference type="PANTHER" id="PTHR23133:SF2">
    <property type="entry name" value="IMIDAZOLEGLYCEROL-PHOSPHATE DEHYDRATASE"/>
    <property type="match status" value="1"/>
</dbReference>
<dbReference type="PANTHER" id="PTHR23133">
    <property type="entry name" value="IMIDAZOLEGLYCEROL-PHOSPHATE DEHYDRATASE HIS7"/>
    <property type="match status" value="1"/>
</dbReference>
<dbReference type="Pfam" id="PF00475">
    <property type="entry name" value="IGPD"/>
    <property type="match status" value="1"/>
</dbReference>
<dbReference type="SUPFAM" id="SSF54211">
    <property type="entry name" value="Ribosomal protein S5 domain 2-like"/>
    <property type="match status" value="2"/>
</dbReference>
<dbReference type="PROSITE" id="PS00955">
    <property type="entry name" value="IGP_DEHYDRATASE_2"/>
    <property type="match status" value="1"/>
</dbReference>
<sequence length="178" mass="19335">MKKFSRKTEETEVEVVLGEELKVDTGIAFLDHMLKTLSRHSGIKLRVKAKGDLEHHVIEDVAIALGKALAGVDKKGLERFGDAIVPMDDAVAICGLDFSGRGVLVVEGTFGDGEMREEDFLHFLDTLCRNAGLNVYLSVKGSNSHHKMEAAVKAVAISLKKALTKNGNDYRSAKGVLD</sequence>
<organism>
    <name type="scientific">Archaeoglobus fulgidus (strain ATCC 49558 / DSM 4304 / JCM 9628 / NBRC 100126 / VC-16)</name>
    <dbReference type="NCBI Taxonomy" id="224325"/>
    <lineage>
        <taxon>Archaea</taxon>
        <taxon>Methanobacteriati</taxon>
        <taxon>Methanobacteriota</taxon>
        <taxon>Archaeoglobi</taxon>
        <taxon>Archaeoglobales</taxon>
        <taxon>Archaeoglobaceae</taxon>
        <taxon>Archaeoglobus</taxon>
    </lineage>
</organism>
<reference key="1">
    <citation type="journal article" date="1997" name="Nature">
        <title>The complete genome sequence of the hyperthermophilic, sulphate-reducing archaeon Archaeoglobus fulgidus.</title>
        <authorList>
            <person name="Klenk H.-P."/>
            <person name="Clayton R.A."/>
            <person name="Tomb J.-F."/>
            <person name="White O."/>
            <person name="Nelson K.E."/>
            <person name="Ketchum K.A."/>
            <person name="Dodson R.J."/>
            <person name="Gwinn M.L."/>
            <person name="Hickey E.K."/>
            <person name="Peterson J.D."/>
            <person name="Richardson D.L."/>
            <person name="Kerlavage A.R."/>
            <person name="Graham D.E."/>
            <person name="Kyrpides N.C."/>
            <person name="Fleischmann R.D."/>
            <person name="Quackenbush J."/>
            <person name="Lee N.H."/>
            <person name="Sutton G.G."/>
            <person name="Gill S.R."/>
            <person name="Kirkness E.F."/>
            <person name="Dougherty B.A."/>
            <person name="McKenney K."/>
            <person name="Adams M.D."/>
            <person name="Loftus B.J."/>
            <person name="Peterson S.N."/>
            <person name="Reich C.I."/>
            <person name="McNeil L.K."/>
            <person name="Badger J.H."/>
            <person name="Glodek A."/>
            <person name="Zhou L."/>
            <person name="Overbeek R."/>
            <person name="Gocayne J.D."/>
            <person name="Weidman J.F."/>
            <person name="McDonald L.A."/>
            <person name="Utterback T.R."/>
            <person name="Cotton M.D."/>
            <person name="Spriggs T."/>
            <person name="Artiach P."/>
            <person name="Kaine B.P."/>
            <person name="Sykes S.M."/>
            <person name="Sadow P.W."/>
            <person name="D'Andrea K.P."/>
            <person name="Bowman C."/>
            <person name="Fujii C."/>
            <person name="Garland S.A."/>
            <person name="Mason T.M."/>
            <person name="Olsen G.J."/>
            <person name="Fraser C.M."/>
            <person name="Smith H.O."/>
            <person name="Woese C.R."/>
            <person name="Venter J.C."/>
        </authorList>
    </citation>
    <scope>NUCLEOTIDE SEQUENCE [LARGE SCALE GENOMIC DNA]</scope>
    <source>
        <strain>ATCC 49558 / DSM 4304 / JCM 9628 / NBRC 100126 / VC-16</strain>
    </source>
</reference>
<accession>O29277</accession>